<organism>
    <name type="scientific">Vicia sativa</name>
    <name type="common">Spring vetch</name>
    <name type="synonym">Tare</name>
    <dbReference type="NCBI Taxonomy" id="3908"/>
    <lineage>
        <taxon>Eukaryota</taxon>
        <taxon>Viridiplantae</taxon>
        <taxon>Streptophyta</taxon>
        <taxon>Embryophyta</taxon>
        <taxon>Tracheophyta</taxon>
        <taxon>Spermatophyta</taxon>
        <taxon>Magnoliopsida</taxon>
        <taxon>eudicotyledons</taxon>
        <taxon>Gunneridae</taxon>
        <taxon>Pentapetalae</taxon>
        <taxon>rosids</taxon>
        <taxon>fabids</taxon>
        <taxon>Fabales</taxon>
        <taxon>Fabaceae</taxon>
        <taxon>Papilionoideae</taxon>
        <taxon>50 kb inversion clade</taxon>
        <taxon>NPAAA clade</taxon>
        <taxon>Hologalegina</taxon>
        <taxon>IRL clade</taxon>
        <taxon>Fabeae</taxon>
        <taxon>Vicia</taxon>
    </lineage>
</organism>
<reference key="1">
    <citation type="book" date="2003" name="Advances in legume systematics - part 10">
        <title>Phylogenetic analyses of tribes Trifolieae and Vicieae based on sequences of the plastid gene matK (Papilionoideae: Leguminosae).</title>
        <editorList>
            <person name="Klitgaard B.B."/>
            <person name="Bruneau A."/>
        </editorList>
        <authorList>
            <person name="Steele K.P."/>
            <person name="Wojciechowski M.F."/>
        </authorList>
    </citation>
    <scope>NUCLEOTIDE SEQUENCE [GENOMIC DNA]</scope>
</reference>
<accession>Q8MCJ5</accession>
<dbReference type="EMBL" id="AF522160">
    <property type="protein sequence ID" value="AAM82152.1"/>
    <property type="molecule type" value="Genomic_DNA"/>
</dbReference>
<dbReference type="RefSeq" id="YP_009141743.1">
    <property type="nucleotide sequence ID" value="NC_027155.1"/>
</dbReference>
<dbReference type="GeneID" id="24418272"/>
<dbReference type="GO" id="GO:0009507">
    <property type="term" value="C:chloroplast"/>
    <property type="evidence" value="ECO:0007669"/>
    <property type="project" value="UniProtKB-SubCell"/>
</dbReference>
<dbReference type="GO" id="GO:0003723">
    <property type="term" value="F:RNA binding"/>
    <property type="evidence" value="ECO:0007669"/>
    <property type="project" value="UniProtKB-KW"/>
</dbReference>
<dbReference type="GO" id="GO:0006397">
    <property type="term" value="P:mRNA processing"/>
    <property type="evidence" value="ECO:0007669"/>
    <property type="project" value="UniProtKB-KW"/>
</dbReference>
<dbReference type="GO" id="GO:0008380">
    <property type="term" value="P:RNA splicing"/>
    <property type="evidence" value="ECO:0007669"/>
    <property type="project" value="UniProtKB-UniRule"/>
</dbReference>
<dbReference type="GO" id="GO:0008033">
    <property type="term" value="P:tRNA processing"/>
    <property type="evidence" value="ECO:0007669"/>
    <property type="project" value="UniProtKB-KW"/>
</dbReference>
<dbReference type="HAMAP" id="MF_01390">
    <property type="entry name" value="MatK"/>
    <property type="match status" value="1"/>
</dbReference>
<dbReference type="InterPro" id="IPR024937">
    <property type="entry name" value="Domain_X"/>
</dbReference>
<dbReference type="InterPro" id="IPR002866">
    <property type="entry name" value="Maturase_MatK"/>
</dbReference>
<dbReference type="InterPro" id="IPR024942">
    <property type="entry name" value="Maturase_MatK_N"/>
</dbReference>
<dbReference type="PANTHER" id="PTHR34811">
    <property type="entry name" value="MATURASE K"/>
    <property type="match status" value="1"/>
</dbReference>
<dbReference type="PANTHER" id="PTHR34811:SF1">
    <property type="entry name" value="MATURASE K"/>
    <property type="match status" value="1"/>
</dbReference>
<dbReference type="Pfam" id="PF01348">
    <property type="entry name" value="Intron_maturas2"/>
    <property type="match status" value="1"/>
</dbReference>
<dbReference type="Pfam" id="PF01824">
    <property type="entry name" value="MatK_N"/>
    <property type="match status" value="1"/>
</dbReference>
<feature type="chain" id="PRO_0000143783" description="Maturase K">
    <location>
        <begin position="1"/>
        <end position="503"/>
    </location>
</feature>
<comment type="function">
    <text evidence="1">Usually encoded in the trnK tRNA gene intron. Probably assists in splicing its own and other chloroplast group II introns.</text>
</comment>
<comment type="subcellular location">
    <subcellularLocation>
        <location>Plastid</location>
        <location>Chloroplast</location>
    </subcellularLocation>
</comment>
<comment type="similarity">
    <text evidence="1">Belongs to the intron maturase 2 family. MatK subfamily.</text>
</comment>
<protein>
    <recommendedName>
        <fullName evidence="1">Maturase K</fullName>
    </recommendedName>
    <alternativeName>
        <fullName evidence="1">Intron maturase</fullName>
    </alternativeName>
</protein>
<geneLocation type="chloroplast"/>
<proteinExistence type="inferred from homology"/>
<evidence type="ECO:0000255" key="1">
    <source>
        <dbReference type="HAMAP-Rule" id="MF_01390"/>
    </source>
</evidence>
<gene>
    <name evidence="1" type="primary">matK</name>
</gene>
<sequence>MKEYKVYLERARSRQQHFLYPLLFREYIYGLAYSHNFNRSIFLENVGYDKKYSLLIVKRLITRMYQKNHLILWANDSNKNSFWGYNKSFYSQIISEGFAMVVEIPFFLQLSSSLEEAEIIKSYKNLRSIHSIFPFLEDKLTYFNYVSDIRIPYPIHLEILVQILRYWVKDAPFFHLLRLFLCNWNSFLTTKKSISTFSKSHPRFFLFLYNFYVCEYESIFVFLRKKSSHLQLKSFSVFFERIFFYPKREHLVKVFAKDFLYTFTFVKDPNIHYVRYQGKCILASKNAPFLMNKWKHFFIHLWQCFFDVWSQPRMININPLSEHSFQLLGYFSNVRLNRSVVRSQMLQNTFLIEIVIKKLDITVPIIPLIRSLAKAKFCNVLGQPISKPVWADSSDFDIIDRFLRICRNLSHYYNGSSKKKSLYRIKYILRLSCIKTLACKHKSTVRAFLKRSGSEEFLQEFFTEEEEILSLIFPRDSSTLQRLHRNRIWYLDILFSNDLVHDE</sequence>
<keyword id="KW-0150">Chloroplast</keyword>
<keyword id="KW-0507">mRNA processing</keyword>
<keyword id="KW-0934">Plastid</keyword>
<keyword id="KW-0694">RNA-binding</keyword>
<keyword id="KW-0819">tRNA processing</keyword>
<name>MATK_VICSA</name>